<gene>
    <name evidence="4" type="primary">PDIA3</name>
</gene>
<reference key="1">
    <citation type="journal article" date="2010" name="Asian J. Androl.">
        <title>Glucose-regulated protein precursor (GRP78) and tumor rejection antigen (GP96) are unique to hamster caput epididymal spermatozoa.</title>
        <authorList>
            <person name="Kameshwari D.B."/>
            <person name="Bhande S."/>
            <person name="Sundaram C.S."/>
            <person name="Kota V."/>
            <person name="Siva A.B."/>
            <person name="Shivaji S."/>
        </authorList>
    </citation>
    <scope>IDENTIFICATION BY MASS SPECTROMETRY</scope>
    <scope>TISSUE SPECIFICITY</scope>
</reference>
<accession>P86235</accession>
<protein>
    <recommendedName>
        <fullName evidence="4">Protein disulfide-isomerase A3</fullName>
        <ecNumber evidence="4">5.3.4.1</ecNumber>
    </recommendedName>
</protein>
<name>PDIA3_MESAU</name>
<keyword id="KW-0007">Acetylation</keyword>
<keyword id="KW-1064">Adaptive immunity</keyword>
<keyword id="KW-1015">Disulfide bond</keyword>
<keyword id="KW-0256">Endoplasmic reticulum</keyword>
<keyword id="KW-0391">Immunity</keyword>
<keyword id="KW-0413">Isomerase</keyword>
<keyword id="KW-0597">Phosphoprotein</keyword>
<keyword id="KW-0676">Redox-active center</keyword>
<keyword id="KW-1185">Reference proteome</keyword>
<keyword id="KW-0677">Repeat</keyword>
<feature type="chain" id="PRO_0000394742" description="Protein disulfide-isomerase A3">
    <location>
        <begin position="1" status="less than"/>
        <end position="208" status="greater than"/>
    </location>
</feature>
<feature type="domain" description="Thioredoxin 1" evidence="6">
    <location>
        <begin position="1" status="less than"/>
        <end position="44" status="greater than"/>
    </location>
</feature>
<feature type="domain" description="Thioredoxin 2" evidence="6">
    <location>
        <begin position="151"/>
        <end position="208" status="greater than"/>
    </location>
</feature>
<feature type="site" description="Lowers pKa of C-terminal Cys of first active site" evidence="1">
    <location>
        <position position="34"/>
    </location>
</feature>
<feature type="modified residue" description="N6-succinyllysine" evidence="3">
    <location>
        <position position="44"/>
    </location>
</feature>
<feature type="modified residue" description="N6-acetyllysine" evidence="3">
    <location>
        <position position="49"/>
    </location>
</feature>
<feature type="modified residue" description="Phosphothreonine" evidence="4">
    <location>
        <position position="133"/>
    </location>
</feature>
<feature type="modified residue" description="N6-acetyllysine" evidence="3">
    <location>
        <position position="163"/>
    </location>
</feature>
<feature type="non-consecutive residues" evidence="8">
    <location>
        <begin position="12"/>
        <end position="13"/>
    </location>
</feature>
<feature type="non-consecutive residues" evidence="8">
    <location>
        <begin position="22"/>
        <end position="23"/>
    </location>
</feature>
<feature type="non-consecutive residues" evidence="8">
    <location>
        <begin position="44"/>
        <end position="45"/>
    </location>
</feature>
<feature type="non-consecutive residues" evidence="8">
    <location>
        <begin position="70"/>
        <end position="71"/>
    </location>
</feature>
<feature type="non-consecutive residues" evidence="8">
    <location>
        <begin position="105"/>
        <end position="106"/>
    </location>
</feature>
<feature type="non-consecutive residues" evidence="8">
    <location>
        <begin position="118"/>
        <end position="119"/>
    </location>
</feature>
<feature type="non-consecutive residues" evidence="8">
    <location>
        <begin position="143"/>
        <end position="144"/>
    </location>
</feature>
<feature type="non-consecutive residues" evidence="8">
    <location>
        <begin position="152"/>
        <end position="153"/>
    </location>
</feature>
<feature type="non-consecutive residues" evidence="8">
    <location>
        <begin position="180"/>
        <end position="181"/>
    </location>
</feature>
<feature type="non-terminal residue">
    <location>
        <position position="1"/>
    </location>
</feature>
<feature type="non-terminal residue">
    <location>
        <position position="208"/>
    </location>
</feature>
<dbReference type="EC" id="5.3.4.1" evidence="4"/>
<dbReference type="SMR" id="P86235"/>
<dbReference type="Proteomes" id="UP000189706">
    <property type="component" value="Unplaced"/>
</dbReference>
<dbReference type="GO" id="GO:0009986">
    <property type="term" value="C:cell surface"/>
    <property type="evidence" value="ECO:0007669"/>
    <property type="project" value="TreeGrafter"/>
</dbReference>
<dbReference type="GO" id="GO:0005783">
    <property type="term" value="C:endoplasmic reticulum"/>
    <property type="evidence" value="ECO:0000250"/>
    <property type="project" value="UniProtKB"/>
</dbReference>
<dbReference type="GO" id="GO:0005788">
    <property type="term" value="C:endoplasmic reticulum lumen"/>
    <property type="evidence" value="ECO:0007669"/>
    <property type="project" value="UniProtKB-SubCell"/>
</dbReference>
<dbReference type="GO" id="GO:0042470">
    <property type="term" value="C:melanosome"/>
    <property type="evidence" value="ECO:0007669"/>
    <property type="project" value="UniProtKB-SubCell"/>
</dbReference>
<dbReference type="GO" id="GO:0003756">
    <property type="term" value="F:protein disulfide isomerase activity"/>
    <property type="evidence" value="ECO:0007669"/>
    <property type="project" value="UniProtKB-EC"/>
</dbReference>
<dbReference type="GO" id="GO:0002250">
    <property type="term" value="P:adaptive immune response"/>
    <property type="evidence" value="ECO:0007669"/>
    <property type="project" value="UniProtKB-KW"/>
</dbReference>
<dbReference type="GO" id="GO:0006457">
    <property type="term" value="P:protein folding"/>
    <property type="evidence" value="ECO:0007669"/>
    <property type="project" value="TreeGrafter"/>
</dbReference>
<dbReference type="GO" id="GO:0034976">
    <property type="term" value="P:response to endoplasmic reticulum stress"/>
    <property type="evidence" value="ECO:0007669"/>
    <property type="project" value="TreeGrafter"/>
</dbReference>
<dbReference type="Gene3D" id="3.40.30.10">
    <property type="entry name" value="Glutaredoxin"/>
    <property type="match status" value="2"/>
</dbReference>
<dbReference type="InterPro" id="IPR036249">
    <property type="entry name" value="Thioredoxin-like_sf"/>
</dbReference>
<dbReference type="PANTHER" id="PTHR18929">
    <property type="entry name" value="PROTEIN DISULFIDE ISOMERASE"/>
    <property type="match status" value="1"/>
</dbReference>
<dbReference type="PANTHER" id="PTHR18929:SF132">
    <property type="entry name" value="PROTEIN DISULFIDE-ISOMERASE A3"/>
    <property type="match status" value="1"/>
</dbReference>
<dbReference type="SUPFAM" id="SSF52833">
    <property type="entry name" value="Thioredoxin-like"/>
    <property type="match status" value="3"/>
</dbReference>
<sequence length="208" mass="23388">RLAPEYEAAATRYGVSGYPTLKDGEEAGAYDGPRTADGIVSHLKFISDKDASVVGFFRDLFSDGHSEFLKFAHTNVESLVKEYDDNGEGITLFRPSHLANKFEDKDLLTAYYDVDYEKKTFSHELSDFGLESTTGEVPVVAIRFVMQEEFSRFLQDYFDGNLKRYLKSEPIPETNDGPVKMDATANDVPSPYEVKGFPTIYFSPANKK</sequence>
<proteinExistence type="evidence at protein level"/>
<comment type="function">
    <text evidence="4">Protein disulfide isomerase that catalyzes the formation, isomerization, and reduction or oxidation of disulfide bonds in client proteins and functions as a protein folding chaperone. Core component of the major histocompatibility complex class I (MHC I) peptide loading complex where it functions as an essential folding chaperone for TAPBP. Through TAPBP, assists the dynamic assembly of the MHC I complex with high affinity antigens in the endoplasmic reticulum. Therefore, plays a crucial role in the presentation of antigens to cytotoxic T cells in adaptive immunity.</text>
</comment>
<comment type="catalytic activity">
    <reaction evidence="4">
        <text>Catalyzes the rearrangement of -S-S- bonds in proteins.</text>
        <dbReference type="EC" id="5.3.4.1"/>
    </reaction>
</comment>
<comment type="subunit">
    <text evidence="3 4">Part of the major histocompatibility complex class I (MHC I) peptide loading complex composed of TAP1, TAP2, B2M, MHC heavy chain, TAPBP, PDIA3, and CALR. Interacts with ERP27 and CANX. Interacts with SERPINA2 and SERPINA1 (By similarity). Interacts with ATP2A2 (By similarity).</text>
</comment>
<comment type="subcellular location">
    <subcellularLocation>
        <location evidence="4">Endoplasmic reticulum</location>
    </subcellularLocation>
    <subcellularLocation>
        <location evidence="2">Endoplasmic reticulum lumen</location>
    </subcellularLocation>
    <subcellularLocation>
        <location evidence="4">Melanosome</location>
    </subcellularLocation>
</comment>
<comment type="tissue specificity">
    <text evidence="7">In the caput epididymal spermatozoa, detected in the mid-peice and at low levels in the principal piece. In the cauda epididymal spermatozoa, detected at very low levels in the principal piece and not in the mid-piece (at protein level).</text>
</comment>
<comment type="PTM">
    <text evidence="4">Within the major histocompatibility complex class I (MHC I) peptide loading complex forms reversible disulfide-linked heterodimers with TAPBP as part of its protein folding chaperone activity. This is essential to assist the dynamic assembly of the MHC I complex with high affinity antigens in the endoplasmic reticulum.</text>
</comment>
<comment type="PTM">
    <text evidence="3">Phosphorylated.</text>
</comment>
<comment type="similarity">
    <text evidence="5">Belongs to the protein disulfide isomerase family.</text>
</comment>
<organism>
    <name type="scientific">Mesocricetus auratus</name>
    <name type="common">Golden hamster</name>
    <dbReference type="NCBI Taxonomy" id="10036"/>
    <lineage>
        <taxon>Eukaryota</taxon>
        <taxon>Metazoa</taxon>
        <taxon>Chordata</taxon>
        <taxon>Craniata</taxon>
        <taxon>Vertebrata</taxon>
        <taxon>Euteleostomi</taxon>
        <taxon>Mammalia</taxon>
        <taxon>Eutheria</taxon>
        <taxon>Euarchontoglires</taxon>
        <taxon>Glires</taxon>
        <taxon>Rodentia</taxon>
        <taxon>Myomorpha</taxon>
        <taxon>Muroidea</taxon>
        <taxon>Cricetidae</taxon>
        <taxon>Cricetinae</taxon>
        <taxon>Mesocricetus</taxon>
    </lineage>
</organism>
<evidence type="ECO:0000250" key="1">
    <source>
        <dbReference type="UniProtKB" id="P07237"/>
    </source>
</evidence>
<evidence type="ECO:0000250" key="2">
    <source>
        <dbReference type="UniProtKB" id="P11598"/>
    </source>
</evidence>
<evidence type="ECO:0000250" key="3">
    <source>
        <dbReference type="UniProtKB" id="P27773"/>
    </source>
</evidence>
<evidence type="ECO:0000250" key="4">
    <source>
        <dbReference type="UniProtKB" id="P30101"/>
    </source>
</evidence>
<evidence type="ECO:0000255" key="5"/>
<evidence type="ECO:0000255" key="6">
    <source>
        <dbReference type="PROSITE-ProRule" id="PRU00691"/>
    </source>
</evidence>
<evidence type="ECO:0000269" key="7">
    <source>
    </source>
</evidence>
<evidence type="ECO:0000305" key="8"/>